<reference key="1">
    <citation type="submission" date="2008-05" db="EMBL/GenBank/DDBJ databases">
        <title>Genome sequence of Helicobacter pylori from the remote Amazon: traces of Asian ancestry of the first Americans.</title>
        <authorList>
            <person name="Kersulyte D."/>
            <person name="Kalia A."/>
            <person name="Gilman R.H."/>
            <person name="Berg D.E."/>
        </authorList>
    </citation>
    <scope>NUCLEOTIDE SEQUENCE [LARGE SCALE GENOMIC DNA]</scope>
    <source>
        <strain>Shi470</strain>
    </source>
</reference>
<evidence type="ECO:0000250" key="1">
    <source>
        <dbReference type="UniProtKB" id="O25806"/>
    </source>
</evidence>
<evidence type="ECO:0000255" key="2">
    <source>
        <dbReference type="HAMAP-Rule" id="MF_01321"/>
    </source>
</evidence>
<evidence type="ECO:0000255" key="3">
    <source>
        <dbReference type="HAMAP-Rule" id="MF_01322"/>
    </source>
</evidence>
<evidence type="ECO:0000305" key="4"/>
<comment type="function">
    <text evidence="2 3">DNA-dependent RNA polymerase catalyzes the transcription of DNA into RNA using the four ribonucleoside triphosphates as substrates.</text>
</comment>
<comment type="catalytic activity">
    <reaction evidence="2 3">
        <text>RNA(n) + a ribonucleoside 5'-triphosphate = RNA(n+1) + diphosphate</text>
        <dbReference type="Rhea" id="RHEA:21248"/>
        <dbReference type="Rhea" id="RHEA-COMP:14527"/>
        <dbReference type="Rhea" id="RHEA-COMP:17342"/>
        <dbReference type="ChEBI" id="CHEBI:33019"/>
        <dbReference type="ChEBI" id="CHEBI:61557"/>
        <dbReference type="ChEBI" id="CHEBI:140395"/>
        <dbReference type="EC" id="2.7.7.6"/>
    </reaction>
</comment>
<comment type="cofactor">
    <cofactor evidence="3">
        <name>Mg(2+)</name>
        <dbReference type="ChEBI" id="CHEBI:18420"/>
    </cofactor>
    <text evidence="3">Binds 1 Mg(2+) ion per subunit.</text>
</comment>
<comment type="cofactor">
    <cofactor evidence="3">
        <name>Zn(2+)</name>
        <dbReference type="ChEBI" id="CHEBI:29105"/>
    </cofactor>
    <text evidence="3">Binds 2 Zn(2+) ions per subunit.</text>
</comment>
<comment type="subunit">
    <text evidence="2 3">The RNAP catalytic core consists of 2 alpha, 1 beta/beta' and 1 omega subunit. When a sigma factor is associated with the core the holoenzyme is formed, which can initiate transcription.</text>
</comment>
<comment type="miscellaneous">
    <text evidence="1">Fusion of rpoB and rpoC occurs naturally in Helicobacter species and at least some Wolbachia; the protein has been artificially split in two in H.pylori. The split protein seems to function normally.</text>
</comment>
<comment type="similarity">
    <text evidence="4">In the N-terminal section; belongs to the RNA polymerase beta chain family.</text>
</comment>
<comment type="similarity">
    <text evidence="4">In the C-terminal section; belongs to the RNA polymerase beta' chain family.</text>
</comment>
<feature type="chain" id="PRO_0000353270" description="Bifunctional DNA-directed RNA polymerase subunit beta-beta'">
    <location>
        <begin position="1"/>
        <end position="2890"/>
    </location>
</feature>
<feature type="region of interest" description="DNA-directed RNA polymerase subunit beta">
    <location>
        <begin position="1"/>
        <end position="1377"/>
    </location>
</feature>
<feature type="region of interest" description="DNA-directed RNA polymerase subunit beta'">
    <location>
        <begin position="1384"/>
        <end position="2890"/>
    </location>
</feature>
<feature type="binding site" evidence="3">
    <location>
        <position position="1449"/>
    </location>
    <ligand>
        <name>Zn(2+)</name>
        <dbReference type="ChEBI" id="CHEBI:29105"/>
        <label>1</label>
    </ligand>
</feature>
<feature type="binding site" evidence="3">
    <location>
        <position position="1451"/>
    </location>
    <ligand>
        <name>Zn(2+)</name>
        <dbReference type="ChEBI" id="CHEBI:29105"/>
        <label>1</label>
    </ligand>
</feature>
<feature type="binding site" evidence="3">
    <location>
        <position position="1465"/>
    </location>
    <ligand>
        <name>Zn(2+)</name>
        <dbReference type="ChEBI" id="CHEBI:29105"/>
        <label>1</label>
    </ligand>
</feature>
<feature type="binding site" evidence="3">
    <location>
        <position position="1468"/>
    </location>
    <ligand>
        <name>Zn(2+)</name>
        <dbReference type="ChEBI" id="CHEBI:29105"/>
        <label>1</label>
    </ligand>
</feature>
<feature type="binding site" evidence="3">
    <location>
        <position position="1849"/>
    </location>
    <ligand>
        <name>Mg(2+)</name>
        <dbReference type="ChEBI" id="CHEBI:18420"/>
    </ligand>
</feature>
<feature type="binding site" evidence="3">
    <location>
        <position position="1851"/>
    </location>
    <ligand>
        <name>Mg(2+)</name>
        <dbReference type="ChEBI" id="CHEBI:18420"/>
    </ligand>
</feature>
<feature type="binding site" evidence="3">
    <location>
        <position position="1853"/>
    </location>
    <ligand>
        <name>Mg(2+)</name>
        <dbReference type="ChEBI" id="CHEBI:18420"/>
    </ligand>
</feature>
<feature type="binding site" evidence="3">
    <location>
        <position position="2179"/>
    </location>
    <ligand>
        <name>Zn(2+)</name>
        <dbReference type="ChEBI" id="CHEBI:29105"/>
        <label>2</label>
    </ligand>
</feature>
<feature type="binding site" evidence="3">
    <location>
        <position position="2253"/>
    </location>
    <ligand>
        <name>Zn(2+)</name>
        <dbReference type="ChEBI" id="CHEBI:29105"/>
        <label>2</label>
    </ligand>
</feature>
<feature type="binding site" evidence="3">
    <location>
        <position position="2260"/>
    </location>
    <ligand>
        <name>Zn(2+)</name>
        <dbReference type="ChEBI" id="CHEBI:29105"/>
        <label>2</label>
    </ligand>
</feature>
<feature type="binding site" evidence="3">
    <location>
        <position position="2263"/>
    </location>
    <ligand>
        <name>Zn(2+)</name>
        <dbReference type="ChEBI" id="CHEBI:29105"/>
        <label>2</label>
    </ligand>
</feature>
<name>RPOBC_HELPS</name>
<gene>
    <name type="primary">rpoBC</name>
    <name type="ordered locus">HPSH_06195</name>
</gene>
<proteinExistence type="inferred from homology"/>
<sequence length="2890" mass="323617">MSKKIPLKNRLRADFTKTPTDLEVPNLLLLQRDSYDSFLYSKEGKESGIEKVFKSIFPIQDEHNRITLEYAGCEFGKSKYTVREAMERGITYSIPLKIKVRLILWEKDTKSGEKNGIKDIKEQSIFIREIPLMTERTSFIINGVERVVVNQLHRSPGVIFKEEESSTSLNKLIYTGQIIPDRGSWLYFEYDSKDVLYARINKRRKVPVTILFRAMDYQKQDIIKMFYPLVKVRYENDKYLIPFASLDANQRMEFDLKDPQGKVILLAGKKLTSRKIKELKENHLEWVEYPMDILLNRHLAEPVMVGKEVLLDMLTQLDKNRLEKIHDLGVQEFVIINDLALGHDASIIQSFSADSESLKLLKQTEKIDDENALAAIRIHKVMKPGDPVTTEVAKQFVKKLFFDPERYDLTMVGRMKMNHKLGLHVPDYITTLTHEDIITTVKYLMKIKNNQGKIDDRDHLGNRRIRAVGELLANELHSGLVKMQKTIKDKLTTMSGTFDSLMPHDLVNSKMITSTIMEFFMGGQLSQFMDQTNPLSEVTHKRRLSALGEGGLVKDRVGFEARDVHPTHYGRICPIETPEGQNIGLINTLSTFTRVNDLGFIEAPYKKVVDGKVVGETIYLTAIQEDSHIIAPASTPIDEEGNILGDLIETRVEGEIVLNEKSKVTLMDLSSSMLVGVAASLIPFLEHDDANRALMGTNMQRQAVPLLRNDAPIVGTGIEKIIARDSWGAIKANRAGVVEKIDSKNIYILGEGKEEAYIDAYSLQKNLRTNQNTSFNQIPIVKVGDKVEAGQIIADGPSMDRGELALGKNVRVAFMPWNGYNFEDAIVVSERITKDDIFTSTHIYEKEVDARELKHGVEEFTADIPDVKEEALAHLDESGIVKVGTYVSAGMILVGKTSPKGEIKSTPEERLLRAIFGDKAGHVVNKSLYCPPSLEGTVIDVKVFTKKGYEKDARVLSAYEEEKAKLDMEHFDRLTMLNREELLRVSSLLSQAILEEPFSHNGKDYKEGDQIPKEEIASINRFTLASLVKKYSKEVQNHYEITKNNFLEQKKVLGEEHEEKLSILEKDDILPNGVIKKVKLYIATKRKLKVGDKMAGRHGNKGIVSNIVPVADMPYTADGEPVDIVLNPLGVPSRMNIGQILEMHLGLVGKEFGKQIASMLEDKTKDFAKELRAKMLEIANAINGKDPLTIHVLESCSDEELLEYAKDWSKGVKMAIPVFEGISQEKFYKLFELAKIAMDGKMDLYDGRTGEKMRERVNVGYMYMIKLHHLVDEKVHARSTGPYSLVTHQPVGGKALFGGQRFGEMEVWALEAYGAAHTLKEMLTIKSDDIRGRENAYRAIAKGEQVGESEIPETFYVLTKELQSLALDINIFGDDVDEDGSPKPIVIKEDDRPKDFSSFQLTLASPEKIHSWSYGEVKKPETINYRTLKPERDGLFCMKIFGPTKDYECLCGKYKKPRFKDIGTCEKCGVAITHSKVRRFRMGHIELATPVAHIWYVNSLPSRIGTLLGVKMKDLERVLYYEAYIVKEPGEAAYDNEGTKLVMKYDILNEEQYQNISRRYEDRGFVAQMGGEAIKDLLEEIDLITLLQSLKEEVKDTNSDAKKKKLIKRLKVVESFLNSGNRPEWMMLTVLPVLPPDLRPLVALDGGKFAVSDVNELYRRVINRNQRLKRLMELGAPEIIVRNEKRMLQEAVDVLFDNGRSTNAVKGANKRPLKSLSEIIKGKQGRFRQNLLGKRVDFSGRSVIVVGPNLKMDECGLPKNMALELFKPHLLSKLEERGYATTLKQAKRMIEQKSNEVWECLQEITEGYPVLLNRAPTLHKQSIQAFHPKLIDGKAIQLHPLVCSAFNADFDGDQMAVHVPLSQEAIAECKVLMLSSMNILLPASGKAVVIPSQDMVLGLYYLSLEKSGVKGEHKLFSSVNEIITAIDTKELDIHAKIRVLDQGNIIATSAGRMIIKSILPDFIPTDLWNRPMKKKDIGVLVDYVHKVGGIGITATFLDNLKTLGFRYATKAGISISMEDIITPKDKQKMVEKAKVEVKKIQQQYDQGLLTDQERYNKIIDTWTEVNDKMSKEMMSTIAQDKEGFNSIYMMADSGARGSAAQIRQLSAMRGLMTKPDGSIIETPIISNFKEGLNVLEYFNSTHGARKGLADTALKTANAGYLTRKLIDVSQNVKVVSDDCGTHEGIEITDIAVGSELIEPLEERIFGRVLLEDVIDPITNEILLYADTLIDEEGAKKVVEAGIKSITIRTPVTCKAPKGVCAKCYGLNLGEGKMSYPGEAVGVVAAQSIGEPGTQLTLRTFHVGGTASRSQDEREIVASKEGFVRFYNLRTYTNKEGKSIIANRRNASILVVEPKIKAPFDGELRIETVYEEVVVSVKNGDQEAKFVLRRSDIVKPSELAGVGGKIEGKVYLPYASGHKVHKGGSIADIIQEGWNVPNRIPYASELLVKDNDPIAQDVYAKEKGAIKYYVLEANHLERTHGIKKGDIVSEKGLFAVIADDNGREAARHYIARGSEILIDDNSEVGANSVISKPTTNTFKTIATWDPYNTPIIADFKGKVGFVDIIAGVTVAEKEDENTGTTSLVVNDYIPSGYKPSLFLEGINGEEVRYFLEPKTSIAISDGVSVEQAEVLAKIPKATVKSRDITGGLPRVSELFEARKPKPKDVAILSEVDGIVSFGKPIRNKEHIIVTSKDGRPMDYFVDKGKQILVHADEFVHAGEAMTDGVVSSHDILRISGEKELYKYIVSEVQQVYRRQGVSIADKHIEIIVSQMLRQVRILDSGDSKFIEGDLVSKKLFKEENARVIALKGEPAIAEPVLLGITRAAIGSDSIISAASFQETTKVLTEASIAMKKDFLEDLKENVVLGRMIPVGTGMYKNKKIVLRTLEDDPKF</sequence>
<organism>
    <name type="scientific">Helicobacter pylori (strain Shi470)</name>
    <dbReference type="NCBI Taxonomy" id="512562"/>
    <lineage>
        <taxon>Bacteria</taxon>
        <taxon>Pseudomonadati</taxon>
        <taxon>Campylobacterota</taxon>
        <taxon>Epsilonproteobacteria</taxon>
        <taxon>Campylobacterales</taxon>
        <taxon>Helicobacteraceae</taxon>
        <taxon>Helicobacter</taxon>
    </lineage>
</organism>
<keyword id="KW-0240">DNA-directed RNA polymerase</keyword>
<keyword id="KW-0460">Magnesium</keyword>
<keyword id="KW-0479">Metal-binding</keyword>
<keyword id="KW-0548">Nucleotidyltransferase</keyword>
<keyword id="KW-0804">Transcription</keyword>
<keyword id="KW-0808">Transferase</keyword>
<keyword id="KW-0862">Zinc</keyword>
<dbReference type="EC" id="2.7.7.6" evidence="2 3"/>
<dbReference type="EMBL" id="CP001072">
    <property type="protein sequence ID" value="ACD48641.1"/>
    <property type="molecule type" value="Genomic_DNA"/>
</dbReference>
<dbReference type="RefSeq" id="WP_000037877.1">
    <property type="nucleotide sequence ID" value="NC_010698.2"/>
</dbReference>
<dbReference type="SMR" id="B2UUV9"/>
<dbReference type="KEGG" id="hps:HPSH_06195"/>
<dbReference type="HOGENOM" id="CLU_000524_0_0_7"/>
<dbReference type="GO" id="GO:0000428">
    <property type="term" value="C:DNA-directed RNA polymerase complex"/>
    <property type="evidence" value="ECO:0007669"/>
    <property type="project" value="UniProtKB-KW"/>
</dbReference>
<dbReference type="GO" id="GO:0003677">
    <property type="term" value="F:DNA binding"/>
    <property type="evidence" value="ECO:0007669"/>
    <property type="project" value="UniProtKB-UniRule"/>
</dbReference>
<dbReference type="GO" id="GO:0003899">
    <property type="term" value="F:DNA-directed RNA polymerase activity"/>
    <property type="evidence" value="ECO:0007669"/>
    <property type="project" value="UniProtKB-UniRule"/>
</dbReference>
<dbReference type="GO" id="GO:0000287">
    <property type="term" value="F:magnesium ion binding"/>
    <property type="evidence" value="ECO:0007669"/>
    <property type="project" value="UniProtKB-UniRule"/>
</dbReference>
<dbReference type="GO" id="GO:0032549">
    <property type="term" value="F:ribonucleoside binding"/>
    <property type="evidence" value="ECO:0007669"/>
    <property type="project" value="InterPro"/>
</dbReference>
<dbReference type="GO" id="GO:0008270">
    <property type="term" value="F:zinc ion binding"/>
    <property type="evidence" value="ECO:0007669"/>
    <property type="project" value="UniProtKB-UniRule"/>
</dbReference>
<dbReference type="GO" id="GO:0006351">
    <property type="term" value="P:DNA-templated transcription"/>
    <property type="evidence" value="ECO:0007669"/>
    <property type="project" value="UniProtKB-UniRule"/>
</dbReference>
<dbReference type="CDD" id="cd00653">
    <property type="entry name" value="RNA_pol_B_RPB2"/>
    <property type="match status" value="1"/>
</dbReference>
<dbReference type="CDD" id="cd02655">
    <property type="entry name" value="RNAP_beta'_C"/>
    <property type="match status" value="1"/>
</dbReference>
<dbReference type="CDD" id="cd01609">
    <property type="entry name" value="RNAP_beta'_N"/>
    <property type="match status" value="1"/>
</dbReference>
<dbReference type="FunFam" id="1.10.132.30:FF:000003">
    <property type="entry name" value="DNA-directed RNA polymerase subunit beta"/>
    <property type="match status" value="1"/>
</dbReference>
<dbReference type="Gene3D" id="1.10.132.30">
    <property type="match status" value="1"/>
</dbReference>
<dbReference type="Gene3D" id="1.10.150.390">
    <property type="match status" value="1"/>
</dbReference>
<dbReference type="Gene3D" id="1.10.1790.20">
    <property type="match status" value="1"/>
</dbReference>
<dbReference type="Gene3D" id="1.10.40.90">
    <property type="match status" value="1"/>
</dbReference>
<dbReference type="Gene3D" id="2.40.40.20">
    <property type="match status" value="1"/>
</dbReference>
<dbReference type="Gene3D" id="2.40.50.100">
    <property type="match status" value="4"/>
</dbReference>
<dbReference type="Gene3D" id="2.40.50.150">
    <property type="match status" value="1"/>
</dbReference>
<dbReference type="Gene3D" id="3.90.1100.10">
    <property type="match status" value="2"/>
</dbReference>
<dbReference type="Gene3D" id="2.30.150.10">
    <property type="entry name" value="DNA-directed RNA polymerase, beta subunit, external 1 domain"/>
    <property type="match status" value="1"/>
</dbReference>
<dbReference type="Gene3D" id="2.40.270.10">
    <property type="entry name" value="DNA-directed RNA polymerase, subunit 2, domain 6"/>
    <property type="match status" value="1"/>
</dbReference>
<dbReference type="Gene3D" id="3.90.1800.10">
    <property type="entry name" value="RNA polymerase alpha subunit dimerisation domain"/>
    <property type="match status" value="1"/>
</dbReference>
<dbReference type="Gene3D" id="4.10.860.120">
    <property type="entry name" value="RNA polymerase II, clamp domain"/>
    <property type="match status" value="1"/>
</dbReference>
<dbReference type="Gene3D" id="1.10.274.100">
    <property type="entry name" value="RNA polymerase Rpb1, domain 3"/>
    <property type="match status" value="2"/>
</dbReference>
<dbReference type="Gene3D" id="3.90.1110.10">
    <property type="entry name" value="RNA polymerase Rpb2, domain 2"/>
    <property type="match status" value="1"/>
</dbReference>
<dbReference type="HAMAP" id="MF_01321">
    <property type="entry name" value="RNApol_bact_RpoB"/>
    <property type="match status" value="1"/>
</dbReference>
<dbReference type="HAMAP" id="MF_01322">
    <property type="entry name" value="RNApol_bact_RpoC"/>
    <property type="match status" value="1"/>
</dbReference>
<dbReference type="InterPro" id="IPR042107">
    <property type="entry name" value="DNA-dir_RNA_pol_bsu_ext_1_sf"/>
</dbReference>
<dbReference type="InterPro" id="IPR019462">
    <property type="entry name" value="DNA-dir_RNA_pol_bsu_external_1"/>
</dbReference>
<dbReference type="InterPro" id="IPR015712">
    <property type="entry name" value="DNA-dir_RNA_pol_su2"/>
</dbReference>
<dbReference type="InterPro" id="IPR007120">
    <property type="entry name" value="DNA-dir_RNAP_su2_dom"/>
</dbReference>
<dbReference type="InterPro" id="IPR037033">
    <property type="entry name" value="DNA-dir_RNAP_su2_hyb_sf"/>
</dbReference>
<dbReference type="InterPro" id="IPR045867">
    <property type="entry name" value="DNA-dir_RpoC_beta_prime"/>
</dbReference>
<dbReference type="InterPro" id="IPR012754">
    <property type="entry name" value="DNA-dir_RpoC_beta_prime_bact"/>
</dbReference>
<dbReference type="InterPro" id="IPR000722">
    <property type="entry name" value="RNA_pol_asu"/>
</dbReference>
<dbReference type="InterPro" id="IPR010243">
    <property type="entry name" value="RNA_pol_bsu_bac"/>
</dbReference>
<dbReference type="InterPro" id="IPR007121">
    <property type="entry name" value="RNA_pol_bsu_CS"/>
</dbReference>
<dbReference type="InterPro" id="IPR007644">
    <property type="entry name" value="RNA_pol_bsu_protrusion"/>
</dbReference>
<dbReference type="InterPro" id="IPR006592">
    <property type="entry name" value="RNA_pol_N"/>
</dbReference>
<dbReference type="InterPro" id="IPR007080">
    <property type="entry name" value="RNA_pol_Rpb1_1"/>
</dbReference>
<dbReference type="InterPro" id="IPR007066">
    <property type="entry name" value="RNA_pol_Rpb1_3"/>
</dbReference>
<dbReference type="InterPro" id="IPR042102">
    <property type="entry name" value="RNA_pol_Rpb1_3_sf"/>
</dbReference>
<dbReference type="InterPro" id="IPR007083">
    <property type="entry name" value="RNA_pol_Rpb1_4"/>
</dbReference>
<dbReference type="InterPro" id="IPR007081">
    <property type="entry name" value="RNA_pol_Rpb1_5"/>
</dbReference>
<dbReference type="InterPro" id="IPR044893">
    <property type="entry name" value="RNA_pol_Rpb1_clamp_domain"/>
</dbReference>
<dbReference type="InterPro" id="IPR007642">
    <property type="entry name" value="RNA_pol_Rpb2_2"/>
</dbReference>
<dbReference type="InterPro" id="IPR037034">
    <property type="entry name" value="RNA_pol_Rpb2_2_sf"/>
</dbReference>
<dbReference type="InterPro" id="IPR007645">
    <property type="entry name" value="RNA_pol_Rpb2_3"/>
</dbReference>
<dbReference type="InterPro" id="IPR007641">
    <property type="entry name" value="RNA_pol_Rpb2_7"/>
</dbReference>
<dbReference type="InterPro" id="IPR014724">
    <property type="entry name" value="RNA_pol_RPB2_OB-fold"/>
</dbReference>
<dbReference type="InterPro" id="IPR038120">
    <property type="entry name" value="Rpb1_funnel_sf"/>
</dbReference>
<dbReference type="NCBIfam" id="NF001616">
    <property type="entry name" value="PRK00405.1"/>
    <property type="match status" value="1"/>
</dbReference>
<dbReference type="NCBIfam" id="NF007172">
    <property type="entry name" value="PRK09603.1"/>
    <property type="match status" value="1"/>
</dbReference>
<dbReference type="NCBIfam" id="TIGR02013">
    <property type="entry name" value="rpoB"/>
    <property type="match status" value="1"/>
</dbReference>
<dbReference type="NCBIfam" id="TIGR02386">
    <property type="entry name" value="rpoC_TIGR"/>
    <property type="match status" value="1"/>
</dbReference>
<dbReference type="PANTHER" id="PTHR19376">
    <property type="entry name" value="DNA-DIRECTED RNA POLYMERASE"/>
    <property type="match status" value="1"/>
</dbReference>
<dbReference type="PANTHER" id="PTHR19376:SF54">
    <property type="entry name" value="DNA-DIRECTED RNA POLYMERASE SUBUNIT BETA"/>
    <property type="match status" value="1"/>
</dbReference>
<dbReference type="Pfam" id="PF04997">
    <property type="entry name" value="RNA_pol_Rpb1_1"/>
    <property type="match status" value="1"/>
</dbReference>
<dbReference type="Pfam" id="PF00623">
    <property type="entry name" value="RNA_pol_Rpb1_2"/>
    <property type="match status" value="1"/>
</dbReference>
<dbReference type="Pfam" id="PF04983">
    <property type="entry name" value="RNA_pol_Rpb1_3"/>
    <property type="match status" value="1"/>
</dbReference>
<dbReference type="Pfam" id="PF05000">
    <property type="entry name" value="RNA_pol_Rpb1_4"/>
    <property type="match status" value="1"/>
</dbReference>
<dbReference type="Pfam" id="PF04998">
    <property type="entry name" value="RNA_pol_Rpb1_5"/>
    <property type="match status" value="1"/>
</dbReference>
<dbReference type="Pfam" id="PF04563">
    <property type="entry name" value="RNA_pol_Rpb2_1"/>
    <property type="match status" value="1"/>
</dbReference>
<dbReference type="Pfam" id="PF04561">
    <property type="entry name" value="RNA_pol_Rpb2_2"/>
    <property type="match status" value="2"/>
</dbReference>
<dbReference type="Pfam" id="PF04565">
    <property type="entry name" value="RNA_pol_Rpb2_3"/>
    <property type="match status" value="1"/>
</dbReference>
<dbReference type="Pfam" id="PF10385">
    <property type="entry name" value="RNA_pol_Rpb2_45"/>
    <property type="match status" value="1"/>
</dbReference>
<dbReference type="Pfam" id="PF00562">
    <property type="entry name" value="RNA_pol_Rpb2_6"/>
    <property type="match status" value="1"/>
</dbReference>
<dbReference type="Pfam" id="PF04560">
    <property type="entry name" value="RNA_pol_Rpb2_7"/>
    <property type="match status" value="1"/>
</dbReference>
<dbReference type="SMART" id="SM00663">
    <property type="entry name" value="RPOLA_N"/>
    <property type="match status" value="1"/>
</dbReference>
<dbReference type="SUPFAM" id="SSF64484">
    <property type="entry name" value="beta and beta-prime subunits of DNA dependent RNA-polymerase"/>
    <property type="match status" value="2"/>
</dbReference>
<dbReference type="PROSITE" id="PS01166">
    <property type="entry name" value="RNA_POL_BETA"/>
    <property type="match status" value="1"/>
</dbReference>
<accession>B2UUV9</accession>
<protein>
    <recommendedName>
        <fullName>Bifunctional DNA-directed RNA polymerase subunit beta-beta'</fullName>
        <ecNumber evidence="2 3">2.7.7.6</ecNumber>
    </recommendedName>
    <domain>
        <recommendedName>
            <fullName evidence="2">DNA-directed RNA polymerase subunit beta</fullName>
        </recommendedName>
        <alternativeName>
            <fullName evidence="2">RNA polymerase subunit beta</fullName>
        </alternativeName>
        <alternativeName>
            <fullName evidence="2">Transcriptase subunit beta</fullName>
        </alternativeName>
    </domain>
    <domain>
        <recommendedName>
            <fullName evidence="3">DNA-directed RNA polymerase subunit beta'</fullName>
        </recommendedName>
        <alternativeName>
            <fullName evidence="3">RNA polymerase beta'</fullName>
        </alternativeName>
        <alternativeName>
            <fullName evidence="3">Transcriptase subunit beta'</fullName>
        </alternativeName>
    </domain>
</protein>